<gene>
    <name evidence="1" type="primary">rlmN</name>
    <name type="ordered locus">Mext_1640</name>
</gene>
<dbReference type="EC" id="2.1.1.192" evidence="1"/>
<dbReference type="EMBL" id="CP000908">
    <property type="protein sequence ID" value="ABY30039.1"/>
    <property type="molecule type" value="Genomic_DNA"/>
</dbReference>
<dbReference type="RefSeq" id="WP_012253225.1">
    <property type="nucleotide sequence ID" value="NC_010172.1"/>
</dbReference>
<dbReference type="SMR" id="A9W383"/>
<dbReference type="KEGG" id="mex:Mext_1640"/>
<dbReference type="eggNOG" id="COG0820">
    <property type="taxonomic scope" value="Bacteria"/>
</dbReference>
<dbReference type="HOGENOM" id="CLU_029101_0_0_5"/>
<dbReference type="BioCyc" id="MEXT419610:MEXT_RS08325-MONOMER"/>
<dbReference type="GO" id="GO:0005737">
    <property type="term" value="C:cytoplasm"/>
    <property type="evidence" value="ECO:0007669"/>
    <property type="project" value="UniProtKB-SubCell"/>
</dbReference>
<dbReference type="GO" id="GO:0051539">
    <property type="term" value="F:4 iron, 4 sulfur cluster binding"/>
    <property type="evidence" value="ECO:0007669"/>
    <property type="project" value="UniProtKB-UniRule"/>
</dbReference>
<dbReference type="GO" id="GO:0046872">
    <property type="term" value="F:metal ion binding"/>
    <property type="evidence" value="ECO:0007669"/>
    <property type="project" value="UniProtKB-KW"/>
</dbReference>
<dbReference type="GO" id="GO:0070040">
    <property type="term" value="F:rRNA (adenine(2503)-C2-)-methyltransferase activity"/>
    <property type="evidence" value="ECO:0007669"/>
    <property type="project" value="UniProtKB-UniRule"/>
</dbReference>
<dbReference type="GO" id="GO:0019843">
    <property type="term" value="F:rRNA binding"/>
    <property type="evidence" value="ECO:0007669"/>
    <property type="project" value="UniProtKB-UniRule"/>
</dbReference>
<dbReference type="GO" id="GO:0002935">
    <property type="term" value="F:tRNA (adenine(37)-C2)-methyltransferase activity"/>
    <property type="evidence" value="ECO:0007669"/>
    <property type="project" value="UniProtKB-UniRule"/>
</dbReference>
<dbReference type="GO" id="GO:0000049">
    <property type="term" value="F:tRNA binding"/>
    <property type="evidence" value="ECO:0007669"/>
    <property type="project" value="UniProtKB-UniRule"/>
</dbReference>
<dbReference type="GO" id="GO:0070475">
    <property type="term" value="P:rRNA base methylation"/>
    <property type="evidence" value="ECO:0007669"/>
    <property type="project" value="UniProtKB-UniRule"/>
</dbReference>
<dbReference type="GO" id="GO:0030488">
    <property type="term" value="P:tRNA methylation"/>
    <property type="evidence" value="ECO:0007669"/>
    <property type="project" value="UniProtKB-UniRule"/>
</dbReference>
<dbReference type="CDD" id="cd01335">
    <property type="entry name" value="Radical_SAM"/>
    <property type="match status" value="1"/>
</dbReference>
<dbReference type="FunFam" id="3.20.20.70:FF:000008">
    <property type="entry name" value="Dual-specificity RNA methyltransferase RlmN"/>
    <property type="match status" value="1"/>
</dbReference>
<dbReference type="Gene3D" id="1.10.150.530">
    <property type="match status" value="1"/>
</dbReference>
<dbReference type="Gene3D" id="3.20.20.70">
    <property type="entry name" value="Aldolase class I"/>
    <property type="match status" value="1"/>
</dbReference>
<dbReference type="HAMAP" id="MF_01849">
    <property type="entry name" value="RNA_methyltr_RlmN"/>
    <property type="match status" value="1"/>
</dbReference>
<dbReference type="InterPro" id="IPR013785">
    <property type="entry name" value="Aldolase_TIM"/>
</dbReference>
<dbReference type="InterPro" id="IPR006638">
    <property type="entry name" value="Elp3/MiaA/NifB-like_rSAM"/>
</dbReference>
<dbReference type="InterPro" id="IPR040072">
    <property type="entry name" value="Methyltransferase_A"/>
</dbReference>
<dbReference type="InterPro" id="IPR048641">
    <property type="entry name" value="RlmN_N"/>
</dbReference>
<dbReference type="InterPro" id="IPR027492">
    <property type="entry name" value="RNA_MTrfase_RlmN"/>
</dbReference>
<dbReference type="InterPro" id="IPR004383">
    <property type="entry name" value="rRNA_lsu_MTrfase_RlmN/Cfr"/>
</dbReference>
<dbReference type="InterPro" id="IPR007197">
    <property type="entry name" value="rSAM"/>
</dbReference>
<dbReference type="NCBIfam" id="TIGR00048">
    <property type="entry name" value="rRNA_mod_RlmN"/>
    <property type="match status" value="1"/>
</dbReference>
<dbReference type="PANTHER" id="PTHR30544">
    <property type="entry name" value="23S RRNA METHYLTRANSFERASE"/>
    <property type="match status" value="1"/>
</dbReference>
<dbReference type="PANTHER" id="PTHR30544:SF5">
    <property type="entry name" value="RADICAL SAM CORE DOMAIN-CONTAINING PROTEIN"/>
    <property type="match status" value="1"/>
</dbReference>
<dbReference type="Pfam" id="PF04055">
    <property type="entry name" value="Radical_SAM"/>
    <property type="match status" value="1"/>
</dbReference>
<dbReference type="Pfam" id="PF21016">
    <property type="entry name" value="RlmN_N"/>
    <property type="match status" value="1"/>
</dbReference>
<dbReference type="PIRSF" id="PIRSF006004">
    <property type="entry name" value="CHP00048"/>
    <property type="match status" value="1"/>
</dbReference>
<dbReference type="SFLD" id="SFLDF00275">
    <property type="entry name" value="adenosine_C2_methyltransferase"/>
    <property type="match status" value="1"/>
</dbReference>
<dbReference type="SFLD" id="SFLDS00029">
    <property type="entry name" value="Radical_SAM"/>
    <property type="match status" value="1"/>
</dbReference>
<dbReference type="SMART" id="SM00729">
    <property type="entry name" value="Elp3"/>
    <property type="match status" value="1"/>
</dbReference>
<dbReference type="SUPFAM" id="SSF102114">
    <property type="entry name" value="Radical SAM enzymes"/>
    <property type="match status" value="1"/>
</dbReference>
<dbReference type="PROSITE" id="PS51918">
    <property type="entry name" value="RADICAL_SAM"/>
    <property type="match status" value="1"/>
</dbReference>
<protein>
    <recommendedName>
        <fullName evidence="1">Dual-specificity RNA methyltransferase RlmN</fullName>
        <ecNumber evidence="1">2.1.1.192</ecNumber>
    </recommendedName>
    <alternativeName>
        <fullName evidence="1">23S rRNA (adenine(2503)-C(2))-methyltransferase</fullName>
    </alternativeName>
    <alternativeName>
        <fullName evidence="1">23S rRNA m2A2503 methyltransferase</fullName>
    </alternativeName>
    <alternativeName>
        <fullName evidence="1">Ribosomal RNA large subunit methyltransferase N</fullName>
    </alternativeName>
    <alternativeName>
        <fullName evidence="1">tRNA (adenine(37)-C(2))-methyltransferase</fullName>
    </alternativeName>
    <alternativeName>
        <fullName evidence="1">tRNA m2A37 methyltransferase</fullName>
    </alternativeName>
</protein>
<comment type="function">
    <text evidence="1">Specifically methylates position 2 of adenine 2503 in 23S rRNA and position 2 of adenine 37 in tRNAs. m2A2503 modification seems to play a crucial role in the proofreading step occurring at the peptidyl transferase center and thus would serve to optimize ribosomal fidelity.</text>
</comment>
<comment type="catalytic activity">
    <reaction evidence="1">
        <text>adenosine(2503) in 23S rRNA + 2 reduced [2Fe-2S]-[ferredoxin] + 2 S-adenosyl-L-methionine = 2-methyladenosine(2503) in 23S rRNA + 5'-deoxyadenosine + L-methionine + 2 oxidized [2Fe-2S]-[ferredoxin] + S-adenosyl-L-homocysteine</text>
        <dbReference type="Rhea" id="RHEA:42916"/>
        <dbReference type="Rhea" id="RHEA-COMP:10000"/>
        <dbReference type="Rhea" id="RHEA-COMP:10001"/>
        <dbReference type="Rhea" id="RHEA-COMP:10152"/>
        <dbReference type="Rhea" id="RHEA-COMP:10282"/>
        <dbReference type="ChEBI" id="CHEBI:17319"/>
        <dbReference type="ChEBI" id="CHEBI:33737"/>
        <dbReference type="ChEBI" id="CHEBI:33738"/>
        <dbReference type="ChEBI" id="CHEBI:57844"/>
        <dbReference type="ChEBI" id="CHEBI:57856"/>
        <dbReference type="ChEBI" id="CHEBI:59789"/>
        <dbReference type="ChEBI" id="CHEBI:74411"/>
        <dbReference type="ChEBI" id="CHEBI:74497"/>
        <dbReference type="EC" id="2.1.1.192"/>
    </reaction>
</comment>
<comment type="catalytic activity">
    <reaction evidence="1">
        <text>adenosine(37) in tRNA + 2 reduced [2Fe-2S]-[ferredoxin] + 2 S-adenosyl-L-methionine = 2-methyladenosine(37) in tRNA + 5'-deoxyadenosine + L-methionine + 2 oxidized [2Fe-2S]-[ferredoxin] + S-adenosyl-L-homocysteine</text>
        <dbReference type="Rhea" id="RHEA:43332"/>
        <dbReference type="Rhea" id="RHEA-COMP:10000"/>
        <dbReference type="Rhea" id="RHEA-COMP:10001"/>
        <dbReference type="Rhea" id="RHEA-COMP:10162"/>
        <dbReference type="Rhea" id="RHEA-COMP:10485"/>
        <dbReference type="ChEBI" id="CHEBI:17319"/>
        <dbReference type="ChEBI" id="CHEBI:33737"/>
        <dbReference type="ChEBI" id="CHEBI:33738"/>
        <dbReference type="ChEBI" id="CHEBI:57844"/>
        <dbReference type="ChEBI" id="CHEBI:57856"/>
        <dbReference type="ChEBI" id="CHEBI:59789"/>
        <dbReference type="ChEBI" id="CHEBI:74411"/>
        <dbReference type="ChEBI" id="CHEBI:74497"/>
        <dbReference type="EC" id="2.1.1.192"/>
    </reaction>
</comment>
<comment type="cofactor">
    <cofactor evidence="1">
        <name>[4Fe-4S] cluster</name>
        <dbReference type="ChEBI" id="CHEBI:49883"/>
    </cofactor>
    <text evidence="1">Binds 1 [4Fe-4S] cluster. The cluster is coordinated with 3 cysteines and an exchangeable S-adenosyl-L-methionine.</text>
</comment>
<comment type="subcellular location">
    <subcellularLocation>
        <location evidence="1">Cytoplasm</location>
    </subcellularLocation>
</comment>
<comment type="miscellaneous">
    <text evidence="1">Reaction proceeds by a ping-pong mechanism involving intermediate methylation of a conserved cysteine residue.</text>
</comment>
<comment type="similarity">
    <text evidence="1">Belongs to the radical SAM superfamily. RlmN family.</text>
</comment>
<sequence length="425" mass="46550">MATASFDSAPGASRALPAIEKAPEVTALSTLPGRKASLVGLTREGLKQALIGIGVPERETRMRVSQVWHWIYVRGAREFSEMTNVGKGLKAQLADHFTLERPEVVTEQVSRDGTRKWLLRMAPTGAHDHNRGAEIECVYIPGDDRGTLCVSSQVGCTLTCSFCHTGTQRLVRNLSTAEIVAQLVVARDALGDFTGQMPGKDGGEPGRLVTNIVFMGMGEPLYNLDAVIDAIAVMSDQEGLALSRRRITVSTSGVVPQMERLGLEANAMLAISLHAVRDELRDELVPLNRKYPIAQLLDACRNYPGLSNARRITFEYVMLKGVNDSDADARALVRLLKGIPAKINLIPFNPWPGSKYECSDWERIERFSEIVFTAGYASPVRTPRGRDILAACGQLKSETEKLRARARLMLEEGMGAEAVYADQVD</sequence>
<evidence type="ECO:0000255" key="1">
    <source>
        <dbReference type="HAMAP-Rule" id="MF_01849"/>
    </source>
</evidence>
<evidence type="ECO:0000255" key="2">
    <source>
        <dbReference type="PROSITE-ProRule" id="PRU01266"/>
    </source>
</evidence>
<accession>A9W383</accession>
<reference key="1">
    <citation type="submission" date="2007-12" db="EMBL/GenBank/DDBJ databases">
        <title>Complete sequence of Methylobacterium extorquens PA1.</title>
        <authorList>
            <consortium name="US DOE Joint Genome Institute"/>
            <person name="Copeland A."/>
            <person name="Lucas S."/>
            <person name="Lapidus A."/>
            <person name="Barry K."/>
            <person name="Glavina del Rio T."/>
            <person name="Dalin E."/>
            <person name="Tice H."/>
            <person name="Pitluck S."/>
            <person name="Saunders E."/>
            <person name="Brettin T."/>
            <person name="Bruce D."/>
            <person name="Detter J.C."/>
            <person name="Han C."/>
            <person name="Schmutz J."/>
            <person name="Larimer F."/>
            <person name="Land M."/>
            <person name="Hauser L."/>
            <person name="Kyrpides N."/>
            <person name="Kim E."/>
            <person name="Marx C."/>
            <person name="Richardson P."/>
        </authorList>
    </citation>
    <scope>NUCLEOTIDE SEQUENCE [LARGE SCALE GENOMIC DNA]</scope>
    <source>
        <strain>PA1</strain>
    </source>
</reference>
<feature type="chain" id="PRO_0000350253" description="Dual-specificity RNA methyltransferase RlmN">
    <location>
        <begin position="1"/>
        <end position="425"/>
    </location>
</feature>
<feature type="domain" description="Radical SAM core" evidence="2">
    <location>
        <begin position="142"/>
        <end position="381"/>
    </location>
</feature>
<feature type="active site" description="Proton acceptor" evidence="1">
    <location>
        <position position="136"/>
    </location>
</feature>
<feature type="active site" description="S-methylcysteine intermediate" evidence="1">
    <location>
        <position position="392"/>
    </location>
</feature>
<feature type="binding site" evidence="1">
    <location>
        <position position="156"/>
    </location>
    <ligand>
        <name>[4Fe-4S] cluster</name>
        <dbReference type="ChEBI" id="CHEBI:49883"/>
        <note>4Fe-4S-S-AdoMet</note>
    </ligand>
</feature>
<feature type="binding site" evidence="1">
    <location>
        <position position="160"/>
    </location>
    <ligand>
        <name>[4Fe-4S] cluster</name>
        <dbReference type="ChEBI" id="CHEBI:49883"/>
        <note>4Fe-4S-S-AdoMet</note>
    </ligand>
</feature>
<feature type="binding site" evidence="1">
    <location>
        <position position="163"/>
    </location>
    <ligand>
        <name>[4Fe-4S] cluster</name>
        <dbReference type="ChEBI" id="CHEBI:49883"/>
        <note>4Fe-4S-S-AdoMet</note>
    </ligand>
</feature>
<feature type="binding site" evidence="1">
    <location>
        <begin position="218"/>
        <end position="219"/>
    </location>
    <ligand>
        <name>S-adenosyl-L-methionine</name>
        <dbReference type="ChEBI" id="CHEBI:59789"/>
    </ligand>
</feature>
<feature type="binding site" evidence="1">
    <location>
        <position position="250"/>
    </location>
    <ligand>
        <name>S-adenosyl-L-methionine</name>
        <dbReference type="ChEBI" id="CHEBI:59789"/>
    </ligand>
</feature>
<feature type="binding site" evidence="1">
    <location>
        <begin position="272"/>
        <end position="274"/>
    </location>
    <ligand>
        <name>S-adenosyl-L-methionine</name>
        <dbReference type="ChEBI" id="CHEBI:59789"/>
    </ligand>
</feature>
<feature type="binding site" evidence="1">
    <location>
        <position position="349"/>
    </location>
    <ligand>
        <name>S-adenosyl-L-methionine</name>
        <dbReference type="ChEBI" id="CHEBI:59789"/>
    </ligand>
</feature>
<feature type="disulfide bond" description="(transient)" evidence="1">
    <location>
        <begin position="149"/>
        <end position="392"/>
    </location>
</feature>
<keyword id="KW-0004">4Fe-4S</keyword>
<keyword id="KW-0963">Cytoplasm</keyword>
<keyword id="KW-1015">Disulfide bond</keyword>
<keyword id="KW-0408">Iron</keyword>
<keyword id="KW-0411">Iron-sulfur</keyword>
<keyword id="KW-0479">Metal-binding</keyword>
<keyword id="KW-0489">Methyltransferase</keyword>
<keyword id="KW-0698">rRNA processing</keyword>
<keyword id="KW-0949">S-adenosyl-L-methionine</keyword>
<keyword id="KW-0808">Transferase</keyword>
<keyword id="KW-0819">tRNA processing</keyword>
<organism>
    <name type="scientific">Methylorubrum extorquens (strain PA1)</name>
    <name type="common">Methylobacterium extorquens</name>
    <dbReference type="NCBI Taxonomy" id="419610"/>
    <lineage>
        <taxon>Bacteria</taxon>
        <taxon>Pseudomonadati</taxon>
        <taxon>Pseudomonadota</taxon>
        <taxon>Alphaproteobacteria</taxon>
        <taxon>Hyphomicrobiales</taxon>
        <taxon>Methylobacteriaceae</taxon>
        <taxon>Methylorubrum</taxon>
    </lineage>
</organism>
<name>RLMN_METEP</name>
<proteinExistence type="inferred from homology"/>